<sequence length="106" mass="12135">MVNQVAQCFTVRRVWLVVVVGLLVHQTTARYVFEECPGVMGNRALHGKVTRVCEDCYNVFRDTDVLAGCRKGCFSSEMFKLCLLAMERVEEFPDFKRWIGILNAGR</sequence>
<name>MIH_FAXLI</name>
<accession>P83636</accession>
<reference evidence="4" key="1">
    <citation type="journal article" date="2005" name="Peptides">
        <title>Characterization of a molt-inhibiting hormone (MIH) of the crayfish, Orconectes limosus, by cDNA cloning and mass spectrometric analysis.</title>
        <authorList>
            <person name="Bulau P."/>
            <person name="Okuno A."/>
            <person name="Thome E."/>
            <person name="Schmitz T."/>
            <person name="Peter-Katalinic J."/>
            <person name="Keller R."/>
        </authorList>
    </citation>
    <scope>NUCLEOTIDE SEQUENCE [MRNA]</scope>
    <scope>PROTEIN SEQUENCE OF 30-104</scope>
    <scope>FUNCTION</scope>
    <scope>SUBCELLULAR LOCATION</scope>
    <scope>TISSUE SPECIFICITY</scope>
    <scope>MASS SPECTROMETRY</scope>
    <scope>AMIDATION AT ALA-104</scope>
    <source>
        <tissue evidence="3">Sinus gland</tissue>
    </source>
</reference>
<keyword id="KW-0027">Amidation</keyword>
<keyword id="KW-0903">Direct protein sequencing</keyword>
<keyword id="KW-1015">Disulfide bond</keyword>
<keyword id="KW-0372">Hormone</keyword>
<keyword id="KW-0527">Neuropeptide</keyword>
<keyword id="KW-0964">Secreted</keyword>
<keyword id="KW-0732">Signal</keyword>
<evidence type="ECO:0000250" key="1">
    <source>
        <dbReference type="UniProtKB" id="P83627"/>
    </source>
</evidence>
<evidence type="ECO:0000255" key="2"/>
<evidence type="ECO:0000269" key="3">
    <source>
    </source>
</evidence>
<evidence type="ECO:0000305" key="4"/>
<organism>
    <name type="scientific">Faxonius limosus</name>
    <name type="common">Spinycheek crayfish</name>
    <name type="synonym">Orconectes limosus</name>
    <dbReference type="NCBI Taxonomy" id="28379"/>
    <lineage>
        <taxon>Eukaryota</taxon>
        <taxon>Metazoa</taxon>
        <taxon>Ecdysozoa</taxon>
        <taxon>Arthropoda</taxon>
        <taxon>Crustacea</taxon>
        <taxon>Multicrustacea</taxon>
        <taxon>Malacostraca</taxon>
        <taxon>Eumalacostraca</taxon>
        <taxon>Eucarida</taxon>
        <taxon>Decapoda</taxon>
        <taxon>Pleocyemata</taxon>
        <taxon>Astacidea</taxon>
        <taxon>Astacoidea</taxon>
        <taxon>Cambaridae</taxon>
        <taxon>Faxonius</taxon>
    </lineage>
</organism>
<comment type="function">
    <text evidence="3">Inhibits Y-organs where molting hormone (ecdysteroid) is secreted. A molting cycle is initiated when MIH secretion diminishes or stops.</text>
</comment>
<comment type="subcellular location">
    <subcellularLocation>
        <location evidence="3">Secreted</location>
    </subcellularLocation>
</comment>
<comment type="tissue specificity">
    <text evidence="3">Sinus gland of the eyestalk.</text>
</comment>
<comment type="mass spectrometry" mass="8664.29" method="Electrospray" evidence="3"/>
<comment type="similarity">
    <text evidence="2">Belongs to the arthropod CHH/MIH/GIH/VIH hormone family.</text>
</comment>
<dbReference type="SMR" id="P83636"/>
<dbReference type="GO" id="GO:0005576">
    <property type="term" value="C:extracellular region"/>
    <property type="evidence" value="ECO:0007669"/>
    <property type="project" value="UniProtKB-SubCell"/>
</dbReference>
<dbReference type="GO" id="GO:0005184">
    <property type="term" value="F:neuropeptide hormone activity"/>
    <property type="evidence" value="ECO:0007669"/>
    <property type="project" value="InterPro"/>
</dbReference>
<dbReference type="GO" id="GO:0007623">
    <property type="term" value="P:circadian rhythm"/>
    <property type="evidence" value="ECO:0007669"/>
    <property type="project" value="TreeGrafter"/>
</dbReference>
<dbReference type="GO" id="GO:0007218">
    <property type="term" value="P:neuropeptide signaling pathway"/>
    <property type="evidence" value="ECO:0007669"/>
    <property type="project" value="UniProtKB-KW"/>
</dbReference>
<dbReference type="Gene3D" id="1.10.2010.10">
    <property type="entry name" value="Crustacean CHH/MIH/GIH neurohormone"/>
    <property type="match status" value="1"/>
</dbReference>
<dbReference type="InterPro" id="IPR018251">
    <property type="entry name" value="Crust_neurhormone_CS"/>
</dbReference>
<dbReference type="InterPro" id="IPR031098">
    <property type="entry name" value="Crust_neurohorm"/>
</dbReference>
<dbReference type="InterPro" id="IPR035957">
    <property type="entry name" value="Crust_neurohorm_sf"/>
</dbReference>
<dbReference type="InterPro" id="IPR001166">
    <property type="entry name" value="Hyperglycemic"/>
</dbReference>
<dbReference type="InterPro" id="IPR001262">
    <property type="entry name" value="Hyperglycemic2"/>
</dbReference>
<dbReference type="PANTHER" id="PTHR35981">
    <property type="entry name" value="ION TRANSPORT PEPTIDE, ISOFORM C"/>
    <property type="match status" value="1"/>
</dbReference>
<dbReference type="PANTHER" id="PTHR35981:SF2">
    <property type="entry name" value="ION TRANSPORT PEPTIDE, ISOFORM C"/>
    <property type="match status" value="1"/>
</dbReference>
<dbReference type="Pfam" id="PF01147">
    <property type="entry name" value="Crust_neurohorm"/>
    <property type="match status" value="1"/>
</dbReference>
<dbReference type="PRINTS" id="PR00549">
    <property type="entry name" value="HYPRGLYCEMC2"/>
</dbReference>
<dbReference type="PRINTS" id="PR00550">
    <property type="entry name" value="HYPRGLYCEMIC"/>
</dbReference>
<dbReference type="SUPFAM" id="SSF81778">
    <property type="entry name" value="Crustacean CHH/MIH/GIH neurohormone"/>
    <property type="match status" value="1"/>
</dbReference>
<dbReference type="PROSITE" id="PS01250">
    <property type="entry name" value="CHH_MIH_GIH"/>
    <property type="match status" value="1"/>
</dbReference>
<protein>
    <recommendedName>
        <fullName>Molt-inhibiting hormone</fullName>
        <shortName>MIH</shortName>
    </recommendedName>
</protein>
<feature type="signal peptide" evidence="3">
    <location>
        <begin position="1"/>
        <end position="29"/>
    </location>
</feature>
<feature type="chain" id="PRO_0000209864" description="Molt-inhibiting hormone" evidence="3">
    <location>
        <begin position="30"/>
        <end position="104"/>
    </location>
</feature>
<feature type="propeptide" id="PRO_0000232593" evidence="3">
    <location>
        <begin position="105"/>
        <end position="106"/>
    </location>
</feature>
<feature type="modified residue" description="Alanine amide" evidence="3">
    <location>
        <position position="104"/>
    </location>
</feature>
<feature type="disulfide bond" evidence="1">
    <location>
        <begin position="36"/>
        <end position="73"/>
    </location>
</feature>
<feature type="disulfide bond" evidence="1">
    <location>
        <begin position="53"/>
        <end position="69"/>
    </location>
</feature>
<feature type="disulfide bond" evidence="1">
    <location>
        <begin position="56"/>
        <end position="82"/>
    </location>
</feature>
<proteinExistence type="evidence at protein level"/>